<gene>
    <name type="primary">AMN</name>
</gene>
<comment type="function">
    <text evidence="1 4">Membrane-bound component of the endocytic receptor formed by AMN and CUBN (PubMed:30523278). Required for normal CUBN glycosylation and trafficking to the cell surface. The complex formed by AMN and CUBN is required for efficient absorption of vitamin B12. Required for normal CUBN-mediated protein transport in the kidney (By similarity).</text>
</comment>
<comment type="subunit">
    <text evidence="4">Interacts (via extracellular region) with CUBN/cubilin, giving rise to a huge complex containing one AMN chain and three CUBN chains.</text>
</comment>
<comment type="subcellular location">
    <subcellularLocation>
        <location evidence="1">Apical cell membrane</location>
        <topology evidence="1">Single-pass type I membrane protein</topology>
    </subcellularLocation>
    <subcellularLocation>
        <location evidence="6">Cell membrane</location>
        <topology evidence="1">Single-pass type I membrane protein</topology>
    </subcellularLocation>
    <subcellularLocation>
        <location evidence="1">Endosome membrane</location>
    </subcellularLocation>
    <subcellularLocation>
        <location evidence="1">Membrane</location>
        <location evidence="1">Coated pit</location>
    </subcellularLocation>
</comment>
<comment type="tissue specificity">
    <text evidence="4">Detected in kidney cortex (at protein level).</text>
</comment>
<comment type="domain">
    <text evidence="4">The complex formed by AMN and CUBN is composed of a 400 Angstrom long stem and a globular crown region. The stem region is probably formed by AMN and the CUBN N-terminal region, including the EGF-like domains. The crown is probably formed by the CUBN CUB domains.</text>
</comment>
<comment type="PTM">
    <text evidence="1">N-glycosylated.</text>
</comment>
<comment type="PTM">
    <text evidence="1">A soluble form arises by proteolytic removal of the membrane anchor.</text>
</comment>
<keyword id="KW-1003">Cell membrane</keyword>
<keyword id="KW-0168">Coated pit</keyword>
<keyword id="KW-1015">Disulfide bond</keyword>
<keyword id="KW-0967">Endosome</keyword>
<keyword id="KW-0325">Glycoprotein</keyword>
<keyword id="KW-0472">Membrane</keyword>
<keyword id="KW-0653">Protein transport</keyword>
<keyword id="KW-1185">Reference proteome</keyword>
<keyword id="KW-0732">Signal</keyword>
<keyword id="KW-0812">Transmembrane</keyword>
<keyword id="KW-1133">Transmembrane helix</keyword>
<keyword id="KW-0813">Transport</keyword>
<evidence type="ECO:0000250" key="1">
    <source>
        <dbReference type="UniProtKB" id="Q9BXJ7"/>
    </source>
</evidence>
<evidence type="ECO:0000255" key="2"/>
<evidence type="ECO:0000255" key="3">
    <source>
        <dbReference type="PROSITE-ProRule" id="PRU00220"/>
    </source>
</evidence>
<evidence type="ECO:0000269" key="4">
    <source>
    </source>
</evidence>
<evidence type="ECO:0000305" key="5"/>
<evidence type="ECO:0000305" key="6">
    <source>
    </source>
</evidence>
<evidence type="ECO:0000312" key="7">
    <source>
        <dbReference type="Proteomes" id="UP000008227"/>
    </source>
</evidence>
<proteinExistence type="evidence at protein level"/>
<feature type="signal peptide" evidence="1">
    <location>
        <begin position="1"/>
        <end position="19"/>
    </location>
</feature>
<feature type="chain" id="PRO_5013402183" description="Protein amnionless">
    <location>
        <begin position="20"/>
        <end position="519"/>
    </location>
</feature>
<feature type="chain" id="PRO_0000447653" description="Soluble protein amnionless">
    <location>
        <begin position="20"/>
        <end status="unknown"/>
    </location>
</feature>
<feature type="topological domain" description="Extracellular" evidence="5">
    <location>
        <begin position="20"/>
        <end position="430"/>
    </location>
</feature>
<feature type="transmembrane region" description="Helical" evidence="2">
    <location>
        <begin position="431"/>
        <end position="451"/>
    </location>
</feature>
<feature type="topological domain" description="Cytoplasmic" evidence="5">
    <location>
        <begin position="452"/>
        <end position="519"/>
    </location>
</feature>
<feature type="domain" description="VWFC" evidence="3">
    <location>
        <begin position="256"/>
        <end position="308"/>
    </location>
</feature>
<feature type="region of interest" description="Interaction with CUBN" evidence="1">
    <location>
        <begin position="67"/>
        <end position="143"/>
    </location>
</feature>
<feature type="glycosylation site" description="N-linked (GlcNAc...) asparagine" evidence="2">
    <location>
        <position position="35"/>
    </location>
</feature>
<feature type="glycosylation site" description="N-linked (GlcNAc...) asparagine" evidence="2">
    <location>
        <position position="39"/>
    </location>
</feature>
<feature type="disulfide bond" evidence="1">
    <location>
        <begin position="43"/>
        <end position="152"/>
    </location>
</feature>
<feature type="disulfide bond" evidence="1">
    <location>
        <begin position="193"/>
        <end position="267"/>
    </location>
</feature>
<feature type="disulfide bond" evidence="1">
    <location>
        <begin position="259"/>
        <end position="265"/>
    </location>
</feature>
<feature type="disulfide bond" evidence="1">
    <location>
        <begin position="277"/>
        <end position="303"/>
    </location>
</feature>
<feature type="disulfide bond" evidence="1">
    <location>
        <begin position="288"/>
        <end position="304"/>
    </location>
</feature>
<feature type="disulfide bond" evidence="1">
    <location>
        <begin position="293"/>
        <end position="307"/>
    </location>
</feature>
<accession>F1SAM7</accession>
<reference evidence="7" key="1">
    <citation type="submission" date="2009-11" db="EMBL/GenBank/DDBJ databases">
        <authorList>
            <consortium name="Porcine genome sequencing project"/>
        </authorList>
    </citation>
    <scope>NUCLEOTIDE SEQUENCE [LARGE SCALE GENOMIC DNA]</scope>
    <source>
        <strain>Duroc</strain>
    </source>
</reference>
<reference key="2">
    <citation type="journal article" date="2018" name="Nat. Commun.">
        <title>Structural assembly of the megadalton-sized receptor for intestinal vitamin B12 uptake and kidney protein reabsorption.</title>
        <authorList>
            <person name="Larsen C."/>
            <person name="Etzerodt A."/>
            <person name="Madsen M."/>
            <person name="Skjodt K."/>
            <person name="Moestrup S.K."/>
            <person name="Andersen C.B.F."/>
        </authorList>
    </citation>
    <scope>STRUCTURE BY ELECTRON MICROSCOPY IN COMPLEX WITH CUBN</scope>
    <scope>FUNCTION</scope>
    <scope>SUBCELLULAR LOCATION</scope>
    <scope>DOMAIN</scope>
</reference>
<organism evidence="7">
    <name type="scientific">Sus scrofa</name>
    <name type="common">Pig</name>
    <dbReference type="NCBI Taxonomy" id="9823"/>
    <lineage>
        <taxon>Eukaryota</taxon>
        <taxon>Metazoa</taxon>
        <taxon>Chordata</taxon>
        <taxon>Craniata</taxon>
        <taxon>Vertebrata</taxon>
        <taxon>Euteleostomi</taxon>
        <taxon>Mammalia</taxon>
        <taxon>Eutheria</taxon>
        <taxon>Laurasiatheria</taxon>
        <taxon>Artiodactyla</taxon>
        <taxon>Suina</taxon>
        <taxon>Suidae</taxon>
        <taxon>Sus</taxon>
    </lineage>
</organism>
<name>AMNLS_PIG</name>
<dbReference type="RefSeq" id="XP_020937290.1">
    <property type="nucleotide sequence ID" value="XM_021081631.1"/>
</dbReference>
<dbReference type="SMR" id="F1SAM7"/>
<dbReference type="FunCoup" id="F1SAM7">
    <property type="interactions" value="51"/>
</dbReference>
<dbReference type="STRING" id="9823.ENSSSCP00000002732"/>
<dbReference type="GlyCosmos" id="F1SAM7">
    <property type="glycosylation" value="2 sites, No reported glycans"/>
</dbReference>
<dbReference type="GlyGen" id="F1SAM7">
    <property type="glycosylation" value="2 sites"/>
</dbReference>
<dbReference type="Ensembl" id="ENSSSCT00090000344">
    <property type="protein sequence ID" value="ENSSSCP00090000223"/>
    <property type="gene ID" value="ENSSSCG00090000199"/>
</dbReference>
<dbReference type="Ensembl" id="ENSSSCT00105026006">
    <property type="protein sequence ID" value="ENSSSCP00105018447"/>
    <property type="gene ID" value="ENSSSCG00105013332"/>
</dbReference>
<dbReference type="Ensembl" id="ENSSSCT00115024858">
    <property type="protein sequence ID" value="ENSSSCP00115023571"/>
    <property type="gene ID" value="ENSSSCG00115014318"/>
</dbReference>
<dbReference type="GeneID" id="100157003"/>
<dbReference type="HOGENOM" id="CLU_050471_0_0_1"/>
<dbReference type="InParanoid" id="F1SAM7"/>
<dbReference type="OMA" id="PDRFSWL"/>
<dbReference type="OrthoDB" id="10067964at2759"/>
<dbReference type="TreeFam" id="TF323790"/>
<dbReference type="Proteomes" id="UP000008227">
    <property type="component" value="Unplaced"/>
</dbReference>
<dbReference type="Proteomes" id="UP000314985">
    <property type="component" value="Unplaced"/>
</dbReference>
<dbReference type="Proteomes" id="UP000694570">
    <property type="component" value="Unplaced"/>
</dbReference>
<dbReference type="Proteomes" id="UP000694571">
    <property type="component" value="Unplaced"/>
</dbReference>
<dbReference type="Proteomes" id="UP000694720">
    <property type="component" value="Unplaced"/>
</dbReference>
<dbReference type="Proteomes" id="UP000694722">
    <property type="component" value="Unplaced"/>
</dbReference>
<dbReference type="Proteomes" id="UP000694723">
    <property type="component" value="Unplaced"/>
</dbReference>
<dbReference type="Proteomes" id="UP000694724">
    <property type="component" value="Unplaced"/>
</dbReference>
<dbReference type="Proteomes" id="UP000694725">
    <property type="component" value="Unplaced"/>
</dbReference>
<dbReference type="Proteomes" id="UP000694726">
    <property type="component" value="Unplaced"/>
</dbReference>
<dbReference type="Proteomes" id="UP000694727">
    <property type="component" value="Unplaced"/>
</dbReference>
<dbReference type="Proteomes" id="UP000694728">
    <property type="component" value="Unplaced"/>
</dbReference>
<dbReference type="GO" id="GO:0016324">
    <property type="term" value="C:apical plasma membrane"/>
    <property type="evidence" value="ECO:0000318"/>
    <property type="project" value="GO_Central"/>
</dbReference>
<dbReference type="GO" id="GO:0005905">
    <property type="term" value="C:clathrin-coated pit"/>
    <property type="evidence" value="ECO:0007669"/>
    <property type="project" value="UniProtKB-KW"/>
</dbReference>
<dbReference type="GO" id="GO:0030139">
    <property type="term" value="C:endocytic vesicle"/>
    <property type="evidence" value="ECO:0000318"/>
    <property type="project" value="GO_Central"/>
</dbReference>
<dbReference type="GO" id="GO:0010008">
    <property type="term" value="C:endosome membrane"/>
    <property type="evidence" value="ECO:0007669"/>
    <property type="project" value="UniProtKB-SubCell"/>
</dbReference>
<dbReference type="GO" id="GO:0008104">
    <property type="term" value="P:protein localization"/>
    <property type="evidence" value="ECO:0000318"/>
    <property type="project" value="GO_Central"/>
</dbReference>
<dbReference type="GO" id="GO:0015031">
    <property type="term" value="P:protein transport"/>
    <property type="evidence" value="ECO:0007669"/>
    <property type="project" value="UniProtKB-KW"/>
</dbReference>
<dbReference type="GO" id="GO:0006898">
    <property type="term" value="P:receptor-mediated endocytosis"/>
    <property type="evidence" value="ECO:0000318"/>
    <property type="project" value="GO_Central"/>
</dbReference>
<dbReference type="InterPro" id="IPR026112">
    <property type="entry name" value="AMN"/>
</dbReference>
<dbReference type="PANTHER" id="PTHR14995">
    <property type="entry name" value="AMNIONLESS"/>
    <property type="match status" value="1"/>
</dbReference>
<dbReference type="PANTHER" id="PTHR14995:SF2">
    <property type="entry name" value="PROTEIN AMNIONLESS"/>
    <property type="match status" value="1"/>
</dbReference>
<dbReference type="Pfam" id="PF14828">
    <property type="entry name" value="Amnionless"/>
    <property type="match status" value="2"/>
</dbReference>
<sequence length="519" mass="55186">MGAPGRVLLWLQLCALTRAAYKLWVPNTYFDAADNWSQNQTPCAGAAVKFPADKMVSVLVREGHSISDMEELQDRKRENIHSFIHCSFIDRASPPASPFRCPAARTGALLPVQSLQCTCILAHRPLLPLDGEFVLASGAGFSAQNTGSHLDCSAGASALFLDPDRFLWHDPRLWSAGDAGRSLFSVDAERVPCRHDDAVFPSDASFRVGLGPGTVRVRSVRALGQTFTRDEDLAAFLASRAGRLRFHGSGALSVDPEACADPSGCVCGNAEVQPWICAALLQPLGGRCPQAACQDALRPEGQCCDLCGAIVSLTHGPAFDLERYRARLLHAFLALPQYQGLRMAMSKVPRQPHLHEASGAKADTEIQVVLAETGPETGSAGRLARALLADIAEHGEALGVLSATARESGPPVGGSSAAGLNAPGARSDLMGGLVAALLLLLLVLLVAALLLRRAGRLRWSRRHEAASEPAGTPLGFRNPVFYTADSVDPPPAPQPDVRSSSRSYFINPLYGEAEAEAEA</sequence>
<protein>
    <recommendedName>
        <fullName>Protein amnionless</fullName>
    </recommendedName>
    <component>
        <recommendedName>
            <fullName>Soluble protein amnionless</fullName>
        </recommendedName>
    </component>
</protein>